<organism>
    <name type="scientific">Escherichia coli (strain SE11)</name>
    <dbReference type="NCBI Taxonomy" id="409438"/>
    <lineage>
        <taxon>Bacteria</taxon>
        <taxon>Pseudomonadati</taxon>
        <taxon>Pseudomonadota</taxon>
        <taxon>Gammaproteobacteria</taxon>
        <taxon>Enterobacterales</taxon>
        <taxon>Enterobacteriaceae</taxon>
        <taxon>Escherichia</taxon>
    </lineage>
</organism>
<evidence type="ECO:0000255" key="1">
    <source>
        <dbReference type="HAMAP-Rule" id="MF_00691"/>
    </source>
</evidence>
<keyword id="KW-0067">ATP-binding</keyword>
<keyword id="KW-0378">Hydrolase</keyword>
<keyword id="KW-0547">Nucleotide-binding</keyword>
<gene>
    <name evidence="1" type="primary">pxpA</name>
    <name type="ordered locus">ECSE_0772</name>
</gene>
<accession>B6I7Y4</accession>
<sequence length="244" mass="25930">MKIDLNADLGEGCASDAELLTLVSSANIACGFHAGDAQTMQACVREAIKNGVAIGAHPSFPDRENFGRSAMQLPPETVYAQTLYQIGALATIARAQGGVMRHVKPHGMLYNQAAKEAQLADAIARAVYACDPALILVGLAGSELIRAGKQYGLTTREEVFADRGYQADGSLVPRSQPGALIENEEQALAQTLEMVQHGRVKSITGEWATVTAQTVCLHGDGEHALAFARRLRSTFAEKEIVVAA</sequence>
<reference key="1">
    <citation type="journal article" date="2008" name="DNA Res.">
        <title>Complete genome sequence and comparative analysis of the wild-type commensal Escherichia coli strain SE11 isolated from a healthy adult.</title>
        <authorList>
            <person name="Oshima K."/>
            <person name="Toh H."/>
            <person name="Ogura Y."/>
            <person name="Sasamoto H."/>
            <person name="Morita H."/>
            <person name="Park S.-H."/>
            <person name="Ooka T."/>
            <person name="Iyoda S."/>
            <person name="Taylor T.D."/>
            <person name="Hayashi T."/>
            <person name="Itoh K."/>
            <person name="Hattori M."/>
        </authorList>
    </citation>
    <scope>NUCLEOTIDE SEQUENCE [LARGE SCALE GENOMIC DNA]</scope>
    <source>
        <strain>SE11</strain>
    </source>
</reference>
<protein>
    <recommendedName>
        <fullName evidence="1">5-oxoprolinase subunit A</fullName>
        <shortName evidence="1">5-OPase subunit A</shortName>
        <ecNumber evidence="1">3.5.2.9</ecNumber>
    </recommendedName>
    <alternativeName>
        <fullName evidence="1">5-oxoprolinase (ATP-hydrolyzing) subunit A</fullName>
    </alternativeName>
</protein>
<comment type="function">
    <text evidence="1">Catalyzes the cleavage of 5-oxoproline to form L-glutamate coupled to the hydrolysis of ATP to ADP and inorganic phosphate.</text>
</comment>
<comment type="catalytic activity">
    <reaction evidence="1">
        <text>5-oxo-L-proline + ATP + 2 H2O = L-glutamate + ADP + phosphate + H(+)</text>
        <dbReference type="Rhea" id="RHEA:10348"/>
        <dbReference type="ChEBI" id="CHEBI:15377"/>
        <dbReference type="ChEBI" id="CHEBI:15378"/>
        <dbReference type="ChEBI" id="CHEBI:29985"/>
        <dbReference type="ChEBI" id="CHEBI:30616"/>
        <dbReference type="ChEBI" id="CHEBI:43474"/>
        <dbReference type="ChEBI" id="CHEBI:58402"/>
        <dbReference type="ChEBI" id="CHEBI:456216"/>
        <dbReference type="EC" id="3.5.2.9"/>
    </reaction>
</comment>
<comment type="subunit">
    <text evidence="1">Forms a complex composed of PxpA, PxpB and PxpC.</text>
</comment>
<comment type="similarity">
    <text evidence="1">Belongs to the LamB/PxpA family.</text>
</comment>
<name>PXPA_ECOSE</name>
<proteinExistence type="inferred from homology"/>
<feature type="chain" id="PRO_1000132055" description="5-oxoprolinase subunit A">
    <location>
        <begin position="1"/>
        <end position="244"/>
    </location>
</feature>
<dbReference type="EC" id="3.5.2.9" evidence="1"/>
<dbReference type="EMBL" id="AP009240">
    <property type="protein sequence ID" value="BAG76296.1"/>
    <property type="molecule type" value="Genomic_DNA"/>
</dbReference>
<dbReference type="RefSeq" id="WP_000687130.1">
    <property type="nucleotide sequence ID" value="NC_011415.1"/>
</dbReference>
<dbReference type="SMR" id="B6I7Y4"/>
<dbReference type="KEGG" id="ecy:ECSE_0772"/>
<dbReference type="HOGENOM" id="CLU_069535_0_0_6"/>
<dbReference type="Proteomes" id="UP000008199">
    <property type="component" value="Chromosome"/>
</dbReference>
<dbReference type="GO" id="GO:0017168">
    <property type="term" value="F:5-oxoprolinase (ATP-hydrolyzing) activity"/>
    <property type="evidence" value="ECO:0007669"/>
    <property type="project" value="UniProtKB-UniRule"/>
</dbReference>
<dbReference type="GO" id="GO:0005524">
    <property type="term" value="F:ATP binding"/>
    <property type="evidence" value="ECO:0007669"/>
    <property type="project" value="UniProtKB-UniRule"/>
</dbReference>
<dbReference type="GO" id="GO:0005975">
    <property type="term" value="P:carbohydrate metabolic process"/>
    <property type="evidence" value="ECO:0007669"/>
    <property type="project" value="InterPro"/>
</dbReference>
<dbReference type="CDD" id="cd10800">
    <property type="entry name" value="LamB_YcsF_YbgL_like"/>
    <property type="match status" value="1"/>
</dbReference>
<dbReference type="Gene3D" id="3.20.20.370">
    <property type="entry name" value="Glycoside hydrolase/deacetylase"/>
    <property type="match status" value="1"/>
</dbReference>
<dbReference type="HAMAP" id="MF_00691">
    <property type="entry name" value="PxpA"/>
    <property type="match status" value="1"/>
</dbReference>
<dbReference type="InterPro" id="IPR011330">
    <property type="entry name" value="Glyco_hydro/deAcase_b/a-brl"/>
</dbReference>
<dbReference type="InterPro" id="IPR005501">
    <property type="entry name" value="LamB/YcsF/PxpA-like"/>
</dbReference>
<dbReference type="NCBIfam" id="NF003812">
    <property type="entry name" value="PRK05406.1-1"/>
    <property type="match status" value="1"/>
</dbReference>
<dbReference type="NCBIfam" id="NF003814">
    <property type="entry name" value="PRK05406.1-3"/>
    <property type="match status" value="1"/>
</dbReference>
<dbReference type="NCBIfam" id="NF003815">
    <property type="entry name" value="PRK05406.1-4"/>
    <property type="match status" value="1"/>
</dbReference>
<dbReference type="NCBIfam" id="NF003816">
    <property type="entry name" value="PRK05406.1-5"/>
    <property type="match status" value="1"/>
</dbReference>
<dbReference type="PANTHER" id="PTHR30292:SF0">
    <property type="entry name" value="5-OXOPROLINASE SUBUNIT A"/>
    <property type="match status" value="1"/>
</dbReference>
<dbReference type="PANTHER" id="PTHR30292">
    <property type="entry name" value="UNCHARACTERIZED PROTEIN YBGL-RELATED"/>
    <property type="match status" value="1"/>
</dbReference>
<dbReference type="Pfam" id="PF03746">
    <property type="entry name" value="LamB_YcsF"/>
    <property type="match status" value="1"/>
</dbReference>
<dbReference type="SUPFAM" id="SSF88713">
    <property type="entry name" value="Glycoside hydrolase/deacetylase"/>
    <property type="match status" value="1"/>
</dbReference>